<feature type="chain" id="PRO_0000116652" description="Uncharacterized protein C29A4.17c">
    <location>
        <begin position="1"/>
        <end position="147"/>
    </location>
</feature>
<feature type="transmembrane region" description="Helical" evidence="1">
    <location>
        <begin position="63"/>
        <end position="79"/>
    </location>
</feature>
<comment type="subcellular location">
    <subcellularLocation>
        <location evidence="2">Membrane</location>
        <topology evidence="2">Single-pass membrane protein</topology>
    </subcellularLocation>
</comment>
<comment type="similarity">
    <text evidence="2">Belongs to the FUN14 family.</text>
</comment>
<accession>O14020</accession>
<reference key="1">
    <citation type="journal article" date="2002" name="Nature">
        <title>The genome sequence of Schizosaccharomyces pombe.</title>
        <authorList>
            <person name="Wood V."/>
            <person name="Gwilliam R."/>
            <person name="Rajandream M.A."/>
            <person name="Lyne M.H."/>
            <person name="Lyne R."/>
            <person name="Stewart A."/>
            <person name="Sgouros J.G."/>
            <person name="Peat N."/>
            <person name="Hayles J."/>
            <person name="Baker S.G."/>
            <person name="Basham D."/>
            <person name="Bowman S."/>
            <person name="Brooks K."/>
            <person name="Brown D."/>
            <person name="Brown S."/>
            <person name="Chillingworth T."/>
            <person name="Churcher C.M."/>
            <person name="Collins M."/>
            <person name="Connor R."/>
            <person name="Cronin A."/>
            <person name="Davis P."/>
            <person name="Feltwell T."/>
            <person name="Fraser A."/>
            <person name="Gentles S."/>
            <person name="Goble A."/>
            <person name="Hamlin N."/>
            <person name="Harris D.E."/>
            <person name="Hidalgo J."/>
            <person name="Hodgson G."/>
            <person name="Holroyd S."/>
            <person name="Hornsby T."/>
            <person name="Howarth S."/>
            <person name="Huckle E.J."/>
            <person name="Hunt S."/>
            <person name="Jagels K."/>
            <person name="James K.D."/>
            <person name="Jones L."/>
            <person name="Jones M."/>
            <person name="Leather S."/>
            <person name="McDonald S."/>
            <person name="McLean J."/>
            <person name="Mooney P."/>
            <person name="Moule S."/>
            <person name="Mungall K.L."/>
            <person name="Murphy L.D."/>
            <person name="Niblett D."/>
            <person name="Odell C."/>
            <person name="Oliver K."/>
            <person name="O'Neil S."/>
            <person name="Pearson D."/>
            <person name="Quail M.A."/>
            <person name="Rabbinowitsch E."/>
            <person name="Rutherford K.M."/>
            <person name="Rutter S."/>
            <person name="Saunders D."/>
            <person name="Seeger K."/>
            <person name="Sharp S."/>
            <person name="Skelton J."/>
            <person name="Simmonds M.N."/>
            <person name="Squares R."/>
            <person name="Squares S."/>
            <person name="Stevens K."/>
            <person name="Taylor K."/>
            <person name="Taylor R.G."/>
            <person name="Tivey A."/>
            <person name="Walsh S.V."/>
            <person name="Warren T."/>
            <person name="Whitehead S."/>
            <person name="Woodward J.R."/>
            <person name="Volckaert G."/>
            <person name="Aert R."/>
            <person name="Robben J."/>
            <person name="Grymonprez B."/>
            <person name="Weltjens I."/>
            <person name="Vanstreels E."/>
            <person name="Rieger M."/>
            <person name="Schaefer M."/>
            <person name="Mueller-Auer S."/>
            <person name="Gabel C."/>
            <person name="Fuchs M."/>
            <person name="Duesterhoeft A."/>
            <person name="Fritzc C."/>
            <person name="Holzer E."/>
            <person name="Moestl D."/>
            <person name="Hilbert H."/>
            <person name="Borzym K."/>
            <person name="Langer I."/>
            <person name="Beck A."/>
            <person name="Lehrach H."/>
            <person name="Reinhardt R."/>
            <person name="Pohl T.M."/>
            <person name="Eger P."/>
            <person name="Zimmermann W."/>
            <person name="Wedler H."/>
            <person name="Wambutt R."/>
            <person name="Purnelle B."/>
            <person name="Goffeau A."/>
            <person name="Cadieu E."/>
            <person name="Dreano S."/>
            <person name="Gloux S."/>
            <person name="Lelaure V."/>
            <person name="Mottier S."/>
            <person name="Galibert F."/>
            <person name="Aves S.J."/>
            <person name="Xiang Z."/>
            <person name="Hunt C."/>
            <person name="Moore K."/>
            <person name="Hurst S.M."/>
            <person name="Lucas M."/>
            <person name="Rochet M."/>
            <person name="Gaillardin C."/>
            <person name="Tallada V.A."/>
            <person name="Garzon A."/>
            <person name="Thode G."/>
            <person name="Daga R.R."/>
            <person name="Cruzado L."/>
            <person name="Jimenez J."/>
            <person name="Sanchez M."/>
            <person name="del Rey F."/>
            <person name="Benito J."/>
            <person name="Dominguez A."/>
            <person name="Revuelta J.L."/>
            <person name="Moreno S."/>
            <person name="Armstrong J."/>
            <person name="Forsburg S.L."/>
            <person name="Cerutti L."/>
            <person name="Lowe T."/>
            <person name="McCombie W.R."/>
            <person name="Paulsen I."/>
            <person name="Potashkin J."/>
            <person name="Shpakovski G.V."/>
            <person name="Ussery D."/>
            <person name="Barrell B.G."/>
            <person name="Nurse P."/>
        </authorList>
    </citation>
    <scope>NUCLEOTIDE SEQUENCE [LARGE SCALE GENOMIC DNA]</scope>
    <source>
        <strain>972 / ATCC 24843</strain>
    </source>
</reference>
<organism>
    <name type="scientific">Schizosaccharomyces pombe (strain 972 / ATCC 24843)</name>
    <name type="common">Fission yeast</name>
    <dbReference type="NCBI Taxonomy" id="284812"/>
    <lineage>
        <taxon>Eukaryota</taxon>
        <taxon>Fungi</taxon>
        <taxon>Dikarya</taxon>
        <taxon>Ascomycota</taxon>
        <taxon>Taphrinomycotina</taxon>
        <taxon>Schizosaccharomycetes</taxon>
        <taxon>Schizosaccharomycetales</taxon>
        <taxon>Schizosaccharomycetaceae</taxon>
        <taxon>Schizosaccharomyces</taxon>
    </lineage>
</organism>
<proteinExistence type="inferred from homology"/>
<keyword id="KW-0472">Membrane</keyword>
<keyword id="KW-1185">Reference proteome</keyword>
<keyword id="KW-0812">Transmembrane</keyword>
<keyword id="KW-1133">Transmembrane helix</keyword>
<protein>
    <recommendedName>
        <fullName>Uncharacterized protein C29A4.17c</fullName>
    </recommendedName>
</protein>
<evidence type="ECO:0000255" key="1"/>
<evidence type="ECO:0000305" key="2"/>
<sequence>MNCLLLGRGFLHRFHPFRPVLCEDSASAATTITSQFKLNYRQIFIGSSLGLAAGFALGKLGRLFIVACSAVFATIAYINSKGLIRINWPQLQQQVIGPTEQYTGFHFPSSGRFNTQSTFPTIRNWICTNPNFKLSFFSAMYVGFVSS</sequence>
<dbReference type="EMBL" id="CU329670">
    <property type="protein sequence ID" value="CAB10143.2"/>
    <property type="molecule type" value="Genomic_DNA"/>
</dbReference>
<dbReference type="PIR" id="T38472">
    <property type="entry name" value="T38472"/>
</dbReference>
<dbReference type="BioGRID" id="278118">
    <property type="interactions" value="18"/>
</dbReference>
<dbReference type="STRING" id="284812.O14020"/>
<dbReference type="PaxDb" id="4896-SPAC29A4.17c.1"/>
<dbReference type="EnsemblFungi" id="SPAC29A4.17c.1">
    <property type="protein sequence ID" value="SPAC29A4.17c.1:pep"/>
    <property type="gene ID" value="SPAC29A4.17c"/>
</dbReference>
<dbReference type="KEGG" id="spo:2541621"/>
<dbReference type="PomBase" id="SPAC29A4.17c"/>
<dbReference type="VEuPathDB" id="FungiDB:SPAC29A4.17c"/>
<dbReference type="HOGENOM" id="CLU_1769191_0_0_1"/>
<dbReference type="InParanoid" id="O14020"/>
<dbReference type="OMA" id="ATIAYIN"/>
<dbReference type="Reactome" id="R-SPO-8934903">
    <property type="pathway name" value="Receptor Mediated Mitophagy"/>
</dbReference>
<dbReference type="PRO" id="PR:O14020"/>
<dbReference type="Proteomes" id="UP000002485">
    <property type="component" value="Chromosome I"/>
</dbReference>
<dbReference type="GO" id="GO:0005741">
    <property type="term" value="C:mitochondrial outer membrane"/>
    <property type="evidence" value="ECO:0000318"/>
    <property type="project" value="GO_Central"/>
</dbReference>
<dbReference type="GO" id="GO:0005739">
    <property type="term" value="C:mitochondrion"/>
    <property type="evidence" value="ECO:0007005"/>
    <property type="project" value="PomBase"/>
</dbReference>
<dbReference type="GO" id="GO:0000422">
    <property type="term" value="P:autophagy of mitochondrion"/>
    <property type="evidence" value="ECO:0000318"/>
    <property type="project" value="GO_Central"/>
</dbReference>
<dbReference type="InterPro" id="IPR007014">
    <property type="entry name" value="FUN14"/>
</dbReference>
<dbReference type="PANTHER" id="PTHR21346">
    <property type="entry name" value="FUN14 DOMAIN CONTAINING"/>
    <property type="match status" value="1"/>
</dbReference>
<dbReference type="PANTHER" id="PTHR21346:SF0">
    <property type="entry name" value="RE45833P"/>
    <property type="match status" value="1"/>
</dbReference>
<dbReference type="Pfam" id="PF04930">
    <property type="entry name" value="FUN14"/>
    <property type="match status" value="1"/>
</dbReference>
<name>YDPH_SCHPO</name>
<gene>
    <name type="ORF">SPAC29A4.17c</name>
</gene>